<organism>
    <name type="scientific">Aquarana catesbeiana</name>
    <name type="common">American bullfrog</name>
    <name type="synonym">Rana catesbeiana</name>
    <dbReference type="NCBI Taxonomy" id="8400"/>
    <lineage>
        <taxon>Eukaryota</taxon>
        <taxon>Metazoa</taxon>
        <taxon>Chordata</taxon>
        <taxon>Craniata</taxon>
        <taxon>Vertebrata</taxon>
        <taxon>Euteleostomi</taxon>
        <taxon>Amphibia</taxon>
        <taxon>Batrachia</taxon>
        <taxon>Anura</taxon>
        <taxon>Neobatrachia</taxon>
        <taxon>Ranoidea</taxon>
        <taxon>Ranidae</taxon>
        <taxon>Aquarana</taxon>
    </lineage>
</organism>
<dbReference type="EC" id="2.1.3.3"/>
<dbReference type="EMBL" id="M95193">
    <property type="protein sequence ID" value="AAA49528.1"/>
    <property type="molecule type" value="mRNA"/>
</dbReference>
<dbReference type="EMBL" id="D38304">
    <property type="protein sequence ID" value="BAA22775.1"/>
    <property type="molecule type" value="mRNA"/>
</dbReference>
<dbReference type="PIR" id="A48421">
    <property type="entry name" value="A48421"/>
</dbReference>
<dbReference type="SMR" id="P31326"/>
<dbReference type="UniPathway" id="UPA00158">
    <property type="reaction ID" value="UER00271"/>
</dbReference>
<dbReference type="GO" id="GO:0005759">
    <property type="term" value="C:mitochondrial matrix"/>
    <property type="evidence" value="ECO:0007669"/>
    <property type="project" value="UniProtKB-SubCell"/>
</dbReference>
<dbReference type="GO" id="GO:0016597">
    <property type="term" value="F:amino acid binding"/>
    <property type="evidence" value="ECO:0007669"/>
    <property type="project" value="InterPro"/>
</dbReference>
<dbReference type="GO" id="GO:0004585">
    <property type="term" value="F:ornithine carbamoyltransferase activity"/>
    <property type="evidence" value="ECO:0007669"/>
    <property type="project" value="UniProtKB-EC"/>
</dbReference>
<dbReference type="GO" id="GO:0042450">
    <property type="term" value="P:arginine biosynthetic process via ornithine"/>
    <property type="evidence" value="ECO:0007669"/>
    <property type="project" value="TreeGrafter"/>
</dbReference>
<dbReference type="GO" id="GO:0019240">
    <property type="term" value="P:citrulline biosynthetic process"/>
    <property type="evidence" value="ECO:0007669"/>
    <property type="project" value="TreeGrafter"/>
</dbReference>
<dbReference type="GO" id="GO:0006526">
    <property type="term" value="P:L-arginine biosynthetic process"/>
    <property type="evidence" value="ECO:0007669"/>
    <property type="project" value="UniProtKB-KW"/>
</dbReference>
<dbReference type="GO" id="GO:0000050">
    <property type="term" value="P:urea cycle"/>
    <property type="evidence" value="ECO:0007669"/>
    <property type="project" value="UniProtKB-UniPathway"/>
</dbReference>
<dbReference type="FunFam" id="3.40.50.1370:FF:000009">
    <property type="entry name" value="Ornithine carbamoyltransferase, mitochondrial"/>
    <property type="match status" value="1"/>
</dbReference>
<dbReference type="FunFam" id="3.40.50.1370:FF:000010">
    <property type="entry name" value="Ornithine carbamoyltransferase, mitochondrial"/>
    <property type="match status" value="1"/>
</dbReference>
<dbReference type="Gene3D" id="3.40.50.1370">
    <property type="entry name" value="Aspartate/ornithine carbamoyltransferase"/>
    <property type="match status" value="2"/>
</dbReference>
<dbReference type="InterPro" id="IPR006132">
    <property type="entry name" value="Asp/Orn_carbamoyltranf_P-bd"/>
</dbReference>
<dbReference type="InterPro" id="IPR006130">
    <property type="entry name" value="Asp/Orn_carbamoylTrfase"/>
</dbReference>
<dbReference type="InterPro" id="IPR036901">
    <property type="entry name" value="Asp/Orn_carbamoylTrfase_sf"/>
</dbReference>
<dbReference type="InterPro" id="IPR006131">
    <property type="entry name" value="Asp_carbamoyltransf_Asp/Orn-bd"/>
</dbReference>
<dbReference type="InterPro" id="IPR002292">
    <property type="entry name" value="Orn/put_carbamltrans"/>
</dbReference>
<dbReference type="NCBIfam" id="TIGR00658">
    <property type="entry name" value="orni_carb_tr"/>
    <property type="match status" value="1"/>
</dbReference>
<dbReference type="NCBIfam" id="NF001986">
    <property type="entry name" value="PRK00779.1"/>
    <property type="match status" value="1"/>
</dbReference>
<dbReference type="PANTHER" id="PTHR45753">
    <property type="entry name" value="ORNITHINE CARBAMOYLTRANSFERASE, MITOCHONDRIAL"/>
    <property type="match status" value="1"/>
</dbReference>
<dbReference type="PANTHER" id="PTHR45753:SF3">
    <property type="entry name" value="ORNITHINE TRANSCARBAMYLASE, MITOCHONDRIAL"/>
    <property type="match status" value="1"/>
</dbReference>
<dbReference type="Pfam" id="PF00185">
    <property type="entry name" value="OTCace"/>
    <property type="match status" value="1"/>
</dbReference>
<dbReference type="Pfam" id="PF02729">
    <property type="entry name" value="OTCace_N"/>
    <property type="match status" value="1"/>
</dbReference>
<dbReference type="PRINTS" id="PR00100">
    <property type="entry name" value="AOTCASE"/>
</dbReference>
<dbReference type="PRINTS" id="PR00102">
    <property type="entry name" value="OTCASE"/>
</dbReference>
<dbReference type="SUPFAM" id="SSF53671">
    <property type="entry name" value="Aspartate/ornithine carbamoyltransferase"/>
    <property type="match status" value="1"/>
</dbReference>
<dbReference type="PROSITE" id="PS00097">
    <property type="entry name" value="CARBAMOYLTRANSFERASE"/>
    <property type="match status" value="1"/>
</dbReference>
<evidence type="ECO:0000250" key="1"/>
<evidence type="ECO:0000305" key="2"/>
<proteinExistence type="evidence at transcript level"/>
<accession>P31326</accession>
<feature type="transit peptide" description="Mitochondrion" evidence="1">
    <location>
        <begin position="1"/>
        <end position="30"/>
    </location>
</feature>
<feature type="chain" id="PRO_0000020338" description="Ornithine carbamoyltransferase, mitochondrial">
    <location>
        <begin position="31"/>
        <end position="350"/>
    </location>
</feature>
<feature type="active site" evidence="1">
    <location>
        <position position="299"/>
    </location>
</feature>
<feature type="binding site" evidence="1">
    <location>
        <begin position="86"/>
        <end position="90"/>
    </location>
    <ligand>
        <name>carbamoyl phosphate</name>
        <dbReference type="ChEBI" id="CHEBI:58228"/>
    </ligand>
</feature>
<feature type="binding site" evidence="1">
    <location>
        <position position="137"/>
    </location>
    <ligand>
        <name>carbamoyl phosphate</name>
        <dbReference type="ChEBI" id="CHEBI:58228"/>
    </ligand>
</feature>
<feature type="binding site" evidence="1">
    <location>
        <position position="137"/>
    </location>
    <ligand>
        <name>L-ornithine</name>
        <dbReference type="ChEBI" id="CHEBI:46911"/>
    </ligand>
</feature>
<feature type="binding site" evidence="1">
    <location>
        <position position="164"/>
    </location>
    <ligand>
        <name>carbamoyl phosphate</name>
        <dbReference type="ChEBI" id="CHEBI:58228"/>
    </ligand>
</feature>
<feature type="binding site" evidence="1">
    <location>
        <position position="195"/>
    </location>
    <ligand>
        <name>L-ornithine</name>
        <dbReference type="ChEBI" id="CHEBI:46911"/>
    </ligand>
</feature>
<feature type="binding site" evidence="1">
    <location>
        <begin position="259"/>
        <end position="263"/>
    </location>
    <ligand>
        <name>L-ornithine</name>
        <dbReference type="ChEBI" id="CHEBI:46911"/>
    </ligand>
</feature>
<feature type="binding site" evidence="1">
    <location>
        <begin position="298"/>
        <end position="301"/>
    </location>
    <ligand>
        <name>L-ornithine</name>
        <dbReference type="ChEBI" id="CHEBI:46911"/>
    </ligand>
</feature>
<feature type="binding site" evidence="1">
    <location>
        <position position="326"/>
    </location>
    <ligand>
        <name>carbamoyl phosphate</name>
        <dbReference type="ChEBI" id="CHEBI:58228"/>
    </ligand>
</feature>
<feature type="binding site" evidence="1">
    <location>
        <position position="326"/>
    </location>
    <ligand>
        <name>L-ornithine</name>
        <dbReference type="ChEBI" id="CHEBI:46911"/>
    </ligand>
</feature>
<sequence>MLHHMRTIINASWRYGNKCIVRQFGFSQTYSQLKGRDLLTLKNYSAEEIKYLLWVAADLKYRIKEKGEYLPLLQGKSLAMIFEKRSTRTRLSTETGFALLGGHPSFLTTQDIHLGVNESLKDTARVLSGMTDAVLARVYHQSDLEVLAEEASIPIVNGLSDDYHPIQILADYLTIQEHYGHLKGLTISWIGDGNNVLHSIMMSAAKFGMHLHIATPKGYEPNSSLTEAAKQFSKECGTKLLMTNDPLEAANGANVLVTDTWVSMGQEEEKKKRLLDFKGYQITMKTAKLAAPNWIFLHCLPRKPEEVDDEVFYCPKSLVFQEAENRKWTIMGVMVSLLTDYSPQLLRPTF</sequence>
<protein>
    <recommendedName>
        <fullName>Ornithine carbamoyltransferase, mitochondrial</fullName>
        <ecNumber>2.1.3.3</ecNumber>
    </recommendedName>
    <alternativeName>
        <fullName>Ornithine transcarbamylase</fullName>
        <shortName>OTCase</shortName>
    </alternativeName>
</protein>
<name>OTC_AQUCT</name>
<keyword id="KW-0028">Amino-acid biosynthesis</keyword>
<keyword id="KW-0055">Arginine biosynthesis</keyword>
<keyword id="KW-0496">Mitochondrion</keyword>
<keyword id="KW-0808">Transferase</keyword>
<keyword id="KW-0809">Transit peptide</keyword>
<keyword id="KW-0835">Urea cycle</keyword>
<comment type="function">
    <text>OTC is necessary for the tadpoles transition from an ammonotelic, aquatic larva to a ureotelic, terrestrial adult.</text>
</comment>
<comment type="catalytic activity">
    <reaction>
        <text>carbamoyl phosphate + L-ornithine = L-citrulline + phosphate + H(+)</text>
        <dbReference type="Rhea" id="RHEA:19513"/>
        <dbReference type="ChEBI" id="CHEBI:15378"/>
        <dbReference type="ChEBI" id="CHEBI:43474"/>
        <dbReference type="ChEBI" id="CHEBI:46911"/>
        <dbReference type="ChEBI" id="CHEBI:57743"/>
        <dbReference type="ChEBI" id="CHEBI:58228"/>
        <dbReference type="EC" id="2.1.3.3"/>
    </reaction>
</comment>
<comment type="pathway">
    <text>Nitrogen metabolism; urea cycle; L-citrulline from L-ornithine and carbamoyl phosphate: step 1/1.</text>
</comment>
<comment type="subunit">
    <text>Homotrimer.</text>
</comment>
<comment type="subcellular location">
    <subcellularLocation>
        <location>Mitochondrion matrix</location>
    </subcellularLocation>
</comment>
<comment type="tissue specificity">
    <text>Liver.</text>
</comment>
<comment type="developmental stage">
    <text>Expressed during embryonic development.</text>
</comment>
<comment type="induction">
    <text>By thyroid hormone.</text>
</comment>
<comment type="similarity">
    <text evidence="2">Belongs to the aspartate/ornithine carbamoyltransferase superfamily. OTCase family.</text>
</comment>
<reference key="1">
    <citation type="journal article" date="1992" name="Dev. Genet.">
        <title>Sequential up-regulation of thyroid hormone beta receptor, ornithine transcarbamylase, and carbamyl phosphate synthetase mRNAs in the liver of Rana catesbeiana tadpoles during spontaneous and thyroid hormone-induced metamorphosis.</title>
        <authorList>
            <person name="Helbing C."/>
            <person name="Gergely G."/>
            <person name="Atkinson B.G."/>
        </authorList>
    </citation>
    <scope>NUCLEOTIDE SEQUENCE [MRNA]</scope>
    <source>
        <tissue>Liver</tissue>
    </source>
</reference>
<reference key="2">
    <citation type="journal article" date="1995" name="Rep. Fac. Sci. Shizouka Univ.">
        <title>Molecular cloning of bullfrog (Rana catesbeiana) ornithine transcarbamylase and induction of its mRNA during spontaneous metamorphosis.</title>
        <authorList>
            <person name="Iwase K."/>
            <person name="Yamauchi K."/>
            <person name="Ishikawa K."/>
        </authorList>
    </citation>
    <scope>NUCLEOTIDE SEQUENCE [MRNA]</scope>
</reference>